<feature type="chain" id="PRO_1000010660" description="Peptidyl-tRNA hydrolase">
    <location>
        <begin position="1"/>
        <end position="189"/>
    </location>
</feature>
<feature type="active site" description="Proton acceptor" evidence="1">
    <location>
        <position position="20"/>
    </location>
</feature>
<feature type="binding site" evidence="1">
    <location>
        <position position="15"/>
    </location>
    <ligand>
        <name>tRNA</name>
        <dbReference type="ChEBI" id="CHEBI:17843"/>
    </ligand>
</feature>
<feature type="binding site" evidence="1">
    <location>
        <position position="66"/>
    </location>
    <ligand>
        <name>tRNA</name>
        <dbReference type="ChEBI" id="CHEBI:17843"/>
    </ligand>
</feature>
<feature type="binding site" evidence="1">
    <location>
        <position position="68"/>
    </location>
    <ligand>
        <name>tRNA</name>
        <dbReference type="ChEBI" id="CHEBI:17843"/>
    </ligand>
</feature>
<feature type="binding site" evidence="1">
    <location>
        <position position="114"/>
    </location>
    <ligand>
        <name>tRNA</name>
        <dbReference type="ChEBI" id="CHEBI:17843"/>
    </ligand>
</feature>
<feature type="site" description="Discriminates between blocked and unblocked aminoacyl-tRNA" evidence="1">
    <location>
        <position position="10"/>
    </location>
</feature>
<feature type="site" description="Stabilizes the basic form of H active site to accept a proton" evidence="1">
    <location>
        <position position="93"/>
    </location>
</feature>
<protein>
    <recommendedName>
        <fullName evidence="1">Peptidyl-tRNA hydrolase</fullName>
        <shortName evidence="1">Pth</shortName>
        <ecNumber evidence="1">3.1.1.29</ecNumber>
    </recommendedName>
</protein>
<evidence type="ECO:0000255" key="1">
    <source>
        <dbReference type="HAMAP-Rule" id="MF_00083"/>
    </source>
</evidence>
<reference key="1">
    <citation type="journal article" date="2006" name="Proc. Natl. Acad. Sci. U.S.A.">
        <title>Comparative genomics of the lactic acid bacteria.</title>
        <authorList>
            <person name="Makarova K.S."/>
            <person name="Slesarev A."/>
            <person name="Wolf Y.I."/>
            <person name="Sorokin A."/>
            <person name="Mirkin B."/>
            <person name="Koonin E.V."/>
            <person name="Pavlov A."/>
            <person name="Pavlova N."/>
            <person name="Karamychev V."/>
            <person name="Polouchine N."/>
            <person name="Shakhova V."/>
            <person name="Grigoriev I."/>
            <person name="Lou Y."/>
            <person name="Rohksar D."/>
            <person name="Lucas S."/>
            <person name="Huang K."/>
            <person name="Goodstein D.M."/>
            <person name="Hawkins T."/>
            <person name="Plengvidhya V."/>
            <person name="Welker D."/>
            <person name="Hughes J."/>
            <person name="Goh Y."/>
            <person name="Benson A."/>
            <person name="Baldwin K."/>
            <person name="Lee J.-H."/>
            <person name="Diaz-Muniz I."/>
            <person name="Dosti B."/>
            <person name="Smeianov V."/>
            <person name="Wechter W."/>
            <person name="Barabote R."/>
            <person name="Lorca G."/>
            <person name="Altermann E."/>
            <person name="Barrangou R."/>
            <person name="Ganesan B."/>
            <person name="Xie Y."/>
            <person name="Rawsthorne H."/>
            <person name="Tamir D."/>
            <person name="Parker C."/>
            <person name="Breidt F."/>
            <person name="Broadbent J.R."/>
            <person name="Hutkins R."/>
            <person name="O'Sullivan D."/>
            <person name="Steele J."/>
            <person name="Unlu G."/>
            <person name="Saier M.H. Jr."/>
            <person name="Klaenhammer T."/>
            <person name="Richardson P."/>
            <person name="Kozyavkin S."/>
            <person name="Weimer B.C."/>
            <person name="Mills D.A."/>
        </authorList>
    </citation>
    <scope>NUCLEOTIDE SEQUENCE [LARGE SCALE GENOMIC DNA]</scope>
    <source>
        <strain>ATCC BAA-491 / LMD-9</strain>
    </source>
</reference>
<comment type="function">
    <text evidence="1">Hydrolyzes ribosome-free peptidyl-tRNAs (with 1 or more amino acids incorporated), which drop off the ribosome during protein synthesis, or as a result of ribosome stalling.</text>
</comment>
<comment type="function">
    <text evidence="1">Catalyzes the release of premature peptidyl moieties from peptidyl-tRNA molecules trapped in stalled 50S ribosomal subunits, and thus maintains levels of free tRNAs and 50S ribosomes.</text>
</comment>
<comment type="catalytic activity">
    <reaction evidence="1">
        <text>an N-acyl-L-alpha-aminoacyl-tRNA + H2O = an N-acyl-L-amino acid + a tRNA + H(+)</text>
        <dbReference type="Rhea" id="RHEA:54448"/>
        <dbReference type="Rhea" id="RHEA-COMP:10123"/>
        <dbReference type="Rhea" id="RHEA-COMP:13883"/>
        <dbReference type="ChEBI" id="CHEBI:15377"/>
        <dbReference type="ChEBI" id="CHEBI:15378"/>
        <dbReference type="ChEBI" id="CHEBI:59874"/>
        <dbReference type="ChEBI" id="CHEBI:78442"/>
        <dbReference type="ChEBI" id="CHEBI:138191"/>
        <dbReference type="EC" id="3.1.1.29"/>
    </reaction>
</comment>
<comment type="subunit">
    <text evidence="1">Monomer.</text>
</comment>
<comment type="subcellular location">
    <subcellularLocation>
        <location evidence="1">Cytoplasm</location>
    </subcellularLocation>
</comment>
<comment type="similarity">
    <text evidence="1">Belongs to the PTH family.</text>
</comment>
<proteinExistence type="inferred from homology"/>
<name>PTH_STRTD</name>
<gene>
    <name evidence="1" type="primary">pth</name>
    <name type="ordered locus">STER_0006</name>
</gene>
<accession>Q03N21</accession>
<keyword id="KW-0963">Cytoplasm</keyword>
<keyword id="KW-0378">Hydrolase</keyword>
<keyword id="KW-0694">RNA-binding</keyword>
<keyword id="KW-0820">tRNA-binding</keyword>
<organism>
    <name type="scientific">Streptococcus thermophilus (strain ATCC BAA-491 / LMD-9)</name>
    <dbReference type="NCBI Taxonomy" id="322159"/>
    <lineage>
        <taxon>Bacteria</taxon>
        <taxon>Bacillati</taxon>
        <taxon>Bacillota</taxon>
        <taxon>Bacilli</taxon>
        <taxon>Lactobacillales</taxon>
        <taxon>Streptococcaceae</taxon>
        <taxon>Streptococcus</taxon>
    </lineage>
</organism>
<sequence length="189" mass="21266">MTKLVVGLGNPGSKYHETRHNVGFMAIDLMAKELGLTFSEEKTFKAEVASTFLNGEKVYFVKPTTFMNLSGLAVRALLAYYNIPMEDFIVIYDDLDMEVGKLRFRQKGSAGGHNGIKSIIAETGTQEFDRIKIGIGRPQKGMTVVNHVLGKFSEDDYAMILLTLDKVETALHHYLKTNDFEDTMRRYNG</sequence>
<dbReference type="EC" id="3.1.1.29" evidence="1"/>
<dbReference type="EMBL" id="CP000419">
    <property type="protein sequence ID" value="ABJ65401.1"/>
    <property type="molecule type" value="Genomic_DNA"/>
</dbReference>
<dbReference type="RefSeq" id="WP_002948591.1">
    <property type="nucleotide sequence ID" value="NZ_CP086001.1"/>
</dbReference>
<dbReference type="SMR" id="Q03N21"/>
<dbReference type="GeneID" id="66897908"/>
<dbReference type="KEGG" id="ste:STER_0006"/>
<dbReference type="HOGENOM" id="CLU_062456_4_1_9"/>
<dbReference type="GO" id="GO:0005737">
    <property type="term" value="C:cytoplasm"/>
    <property type="evidence" value="ECO:0007669"/>
    <property type="project" value="UniProtKB-SubCell"/>
</dbReference>
<dbReference type="GO" id="GO:0004045">
    <property type="term" value="F:peptidyl-tRNA hydrolase activity"/>
    <property type="evidence" value="ECO:0007669"/>
    <property type="project" value="UniProtKB-UniRule"/>
</dbReference>
<dbReference type="GO" id="GO:0000049">
    <property type="term" value="F:tRNA binding"/>
    <property type="evidence" value="ECO:0007669"/>
    <property type="project" value="UniProtKB-UniRule"/>
</dbReference>
<dbReference type="GO" id="GO:0006515">
    <property type="term" value="P:protein quality control for misfolded or incompletely synthesized proteins"/>
    <property type="evidence" value="ECO:0007669"/>
    <property type="project" value="UniProtKB-UniRule"/>
</dbReference>
<dbReference type="GO" id="GO:0072344">
    <property type="term" value="P:rescue of stalled ribosome"/>
    <property type="evidence" value="ECO:0007669"/>
    <property type="project" value="UniProtKB-UniRule"/>
</dbReference>
<dbReference type="CDD" id="cd00462">
    <property type="entry name" value="PTH"/>
    <property type="match status" value="1"/>
</dbReference>
<dbReference type="FunFam" id="3.40.50.1470:FF:000001">
    <property type="entry name" value="Peptidyl-tRNA hydrolase"/>
    <property type="match status" value="1"/>
</dbReference>
<dbReference type="Gene3D" id="3.40.50.1470">
    <property type="entry name" value="Peptidyl-tRNA hydrolase"/>
    <property type="match status" value="1"/>
</dbReference>
<dbReference type="HAMAP" id="MF_00083">
    <property type="entry name" value="Pept_tRNA_hydro_bact"/>
    <property type="match status" value="1"/>
</dbReference>
<dbReference type="InterPro" id="IPR001328">
    <property type="entry name" value="Pept_tRNA_hydro"/>
</dbReference>
<dbReference type="InterPro" id="IPR018171">
    <property type="entry name" value="Pept_tRNA_hydro_CS"/>
</dbReference>
<dbReference type="InterPro" id="IPR036416">
    <property type="entry name" value="Pept_tRNA_hydro_sf"/>
</dbReference>
<dbReference type="NCBIfam" id="TIGR00447">
    <property type="entry name" value="pth"/>
    <property type="match status" value="1"/>
</dbReference>
<dbReference type="PANTHER" id="PTHR17224">
    <property type="entry name" value="PEPTIDYL-TRNA HYDROLASE"/>
    <property type="match status" value="1"/>
</dbReference>
<dbReference type="PANTHER" id="PTHR17224:SF1">
    <property type="entry name" value="PEPTIDYL-TRNA HYDROLASE"/>
    <property type="match status" value="1"/>
</dbReference>
<dbReference type="Pfam" id="PF01195">
    <property type="entry name" value="Pept_tRNA_hydro"/>
    <property type="match status" value="1"/>
</dbReference>
<dbReference type="SUPFAM" id="SSF53178">
    <property type="entry name" value="Peptidyl-tRNA hydrolase-like"/>
    <property type="match status" value="1"/>
</dbReference>
<dbReference type="PROSITE" id="PS01195">
    <property type="entry name" value="PEPT_TRNA_HYDROL_1"/>
    <property type="match status" value="1"/>
</dbReference>
<dbReference type="PROSITE" id="PS01196">
    <property type="entry name" value="PEPT_TRNA_HYDROL_2"/>
    <property type="match status" value="1"/>
</dbReference>